<name>ADCF_DICDI</name>
<protein>
    <recommendedName>
        <fullName>Arrestin domain-containing protein F</fullName>
    </recommendedName>
</protein>
<accession>Q54HT7</accession>
<evidence type="ECO:0000255" key="1"/>
<evidence type="ECO:0000256" key="2">
    <source>
        <dbReference type="SAM" id="MobiDB-lite"/>
    </source>
</evidence>
<evidence type="ECO:0000305" key="3"/>
<keyword id="KW-0175">Coiled coil</keyword>
<keyword id="KW-1185">Reference proteome</keyword>
<proteinExistence type="inferred from homology"/>
<feature type="chain" id="PRO_0000363159" description="Arrestin domain-containing protein F">
    <location>
        <begin position="1"/>
        <end position="1030"/>
    </location>
</feature>
<feature type="region of interest" description="Disordered" evidence="2">
    <location>
        <begin position="1"/>
        <end position="27"/>
    </location>
</feature>
<feature type="region of interest" description="Disordered" evidence="2">
    <location>
        <begin position="119"/>
        <end position="154"/>
    </location>
</feature>
<feature type="region of interest" description="Disordered" evidence="2">
    <location>
        <begin position="539"/>
        <end position="572"/>
    </location>
</feature>
<feature type="region of interest" description="Disordered" evidence="2">
    <location>
        <begin position="885"/>
        <end position="931"/>
    </location>
</feature>
<feature type="coiled-coil region" evidence="1">
    <location>
        <begin position="320"/>
        <end position="374"/>
    </location>
</feature>
<feature type="coiled-coil region" evidence="1">
    <location>
        <begin position="544"/>
        <end position="577"/>
    </location>
</feature>
<feature type="compositionally biased region" description="Acidic residues" evidence="2">
    <location>
        <begin position="128"/>
        <end position="137"/>
    </location>
</feature>
<feature type="compositionally biased region" description="Low complexity" evidence="2">
    <location>
        <begin position="142"/>
        <end position="152"/>
    </location>
</feature>
<feature type="compositionally biased region" description="Basic and acidic residues" evidence="2">
    <location>
        <begin position="547"/>
        <end position="562"/>
    </location>
</feature>
<feature type="compositionally biased region" description="Low complexity" evidence="2">
    <location>
        <begin position="910"/>
        <end position="931"/>
    </location>
</feature>
<dbReference type="EMBL" id="AAFI02000131">
    <property type="protein sequence ID" value="EAL62848.1"/>
    <property type="molecule type" value="Genomic_DNA"/>
</dbReference>
<dbReference type="RefSeq" id="XP_636352.1">
    <property type="nucleotide sequence ID" value="XM_631260.1"/>
</dbReference>
<dbReference type="FunCoup" id="Q54HT7">
    <property type="interactions" value="273"/>
</dbReference>
<dbReference type="STRING" id="44689.Q54HT7"/>
<dbReference type="PaxDb" id="44689-DDB0267094"/>
<dbReference type="EnsemblProtists" id="EAL62848">
    <property type="protein sequence ID" value="EAL62848"/>
    <property type="gene ID" value="DDB_G0289229"/>
</dbReference>
<dbReference type="GeneID" id="8627025"/>
<dbReference type="KEGG" id="ddi:DDB_G0289229"/>
<dbReference type="dictyBase" id="DDB_G0289229">
    <property type="gene designation" value="adcF"/>
</dbReference>
<dbReference type="VEuPathDB" id="AmoebaDB:DDB_G0289229"/>
<dbReference type="eggNOG" id="ENOG502RDNR">
    <property type="taxonomic scope" value="Eukaryota"/>
</dbReference>
<dbReference type="HOGENOM" id="CLU_294481_0_0_1"/>
<dbReference type="InParanoid" id="Q54HT7"/>
<dbReference type="OMA" id="FENNINC"/>
<dbReference type="PRO" id="PR:Q54HT7"/>
<dbReference type="Proteomes" id="UP000002195">
    <property type="component" value="Chromosome 5"/>
</dbReference>
<dbReference type="GO" id="GO:0005737">
    <property type="term" value="C:cytoplasm"/>
    <property type="evidence" value="ECO:0000318"/>
    <property type="project" value="GO_Central"/>
</dbReference>
<dbReference type="GO" id="GO:0015031">
    <property type="term" value="P:protein transport"/>
    <property type="evidence" value="ECO:0000318"/>
    <property type="project" value="GO_Central"/>
</dbReference>
<dbReference type="Gene3D" id="2.60.40.640">
    <property type="match status" value="3"/>
</dbReference>
<dbReference type="InterPro" id="IPR014752">
    <property type="entry name" value="Arrestin-like_C"/>
</dbReference>
<dbReference type="InterPro" id="IPR011022">
    <property type="entry name" value="Arrestin_C-like"/>
</dbReference>
<dbReference type="InterPro" id="IPR050357">
    <property type="entry name" value="Arrestin_domain-protein"/>
</dbReference>
<dbReference type="InterPro" id="IPR014756">
    <property type="entry name" value="Ig_E-set"/>
</dbReference>
<dbReference type="PANTHER" id="PTHR11188">
    <property type="entry name" value="ARRESTIN DOMAIN CONTAINING PROTEIN"/>
    <property type="match status" value="1"/>
</dbReference>
<dbReference type="PANTHER" id="PTHR11188:SF129">
    <property type="entry name" value="ARRESTIN DOMAIN-CONTAINING PROTEIN F"/>
    <property type="match status" value="1"/>
</dbReference>
<dbReference type="Pfam" id="PF02752">
    <property type="entry name" value="Arrestin_C"/>
    <property type="match status" value="1"/>
</dbReference>
<dbReference type="SMART" id="SM01017">
    <property type="entry name" value="Arrestin_C"/>
    <property type="match status" value="1"/>
</dbReference>
<dbReference type="SUPFAM" id="SSF81296">
    <property type="entry name" value="E set domains"/>
    <property type="match status" value="1"/>
</dbReference>
<comment type="similarity">
    <text evidence="3">Belongs to the arrestin family.</text>
</comment>
<sequence length="1030" mass="117724">MEIIKENNENDGENINNIPKKKSGSKRQLSFKKKWKASFKKNDFVNSHGINYNKSVGVGGNSGMPQRRNSIVAKPIGLTSYKINHNHNYQSQKLTWKYTSPTNSSLNLKNSDLKYLNNENKNISDNSNFDDGEEDDTDNKKNINNKNNNNNNPLTDIINIEEKIANTTTTTTNTTTINTETKNDIDTTISKLNNFYDNDETNNNIQNETDGNNNNSFSISNNLIIKEKNNNNNKNDNGDSDDDEDCKIIILDKPHIENLNDKNKQILSQPHTLTQPLTPTSNNTHKSTLFKKLELPPAPPSPPQPPVFQNLNNCDNIIQHQLENNCDAKNKSINIYNNEFDFKNNNNNIIENNENFEKNLNLLNNNNNFYHNNNLKKSKDNILKKSNNNINNINNININNNNNNNKKSKSKIKIFKKLLNNNIDRLNKNNMDNVLMKSQIIQINGAEIDDGNNYFNKNDQQHIEDNLMFLNETSQTNNATCEIDNLIDSIKINLSNGYFIAGQKVTGNLEISLNQDIKTSGLNLKWKVFEHVIINHYQSPQSPQKLNKKDKEKEKEKEKENDNDNENNNSESLIRDQSFELIDASSLKSFSNSSNCGSSLRNSQSINLNNYNFNNYKGGTLKKNSKIFNVLKNSSSITNFLKINPLTSSSSDFSLNSSSNYNLNLFNENRLIYKNQEKKTIYESGDSIFQTDDNGGIMNSGLHIIPFSFLLPSHLPSSFSDFTIDKETNEKILSAIIYKLSISFQDILYEEEDNDENNNNNFYNQHDDNEDNENIRNKKEYLKSLYELLKDYKIKKSFTVCEPSIIAAKVNEIPIRMEKKKSFLVNSGQISLKVALKRTIFFANEKIPINIKIENASSRSIDYILISIKKIQNISLSLIKKSKNNNEKQQQQIEKDNDEQQPNITDLTLSPSSSSFLSNSSNTSSSKNNNNNNNNLIFKKCTFKTSQRFNGVDAHCNFSDTILFDTNEIKGFNQTTNGTLIKCHYNIVIQCFVKRAFNVVCRIPILFGALPENNLTSIFNDEYQLNLLNM</sequence>
<organism>
    <name type="scientific">Dictyostelium discoideum</name>
    <name type="common">Social amoeba</name>
    <dbReference type="NCBI Taxonomy" id="44689"/>
    <lineage>
        <taxon>Eukaryota</taxon>
        <taxon>Amoebozoa</taxon>
        <taxon>Evosea</taxon>
        <taxon>Eumycetozoa</taxon>
        <taxon>Dictyostelia</taxon>
        <taxon>Dictyosteliales</taxon>
        <taxon>Dictyosteliaceae</taxon>
        <taxon>Dictyostelium</taxon>
    </lineage>
</organism>
<gene>
    <name type="primary">adcF</name>
    <name type="ORF">DDB_G0289229</name>
</gene>
<reference key="1">
    <citation type="journal article" date="2005" name="Nature">
        <title>The genome of the social amoeba Dictyostelium discoideum.</title>
        <authorList>
            <person name="Eichinger L."/>
            <person name="Pachebat J.A."/>
            <person name="Gloeckner G."/>
            <person name="Rajandream M.A."/>
            <person name="Sucgang R."/>
            <person name="Berriman M."/>
            <person name="Song J."/>
            <person name="Olsen R."/>
            <person name="Szafranski K."/>
            <person name="Xu Q."/>
            <person name="Tunggal B."/>
            <person name="Kummerfeld S."/>
            <person name="Madera M."/>
            <person name="Konfortov B.A."/>
            <person name="Rivero F."/>
            <person name="Bankier A.T."/>
            <person name="Lehmann R."/>
            <person name="Hamlin N."/>
            <person name="Davies R."/>
            <person name="Gaudet P."/>
            <person name="Fey P."/>
            <person name="Pilcher K."/>
            <person name="Chen G."/>
            <person name="Saunders D."/>
            <person name="Sodergren E.J."/>
            <person name="Davis P."/>
            <person name="Kerhornou A."/>
            <person name="Nie X."/>
            <person name="Hall N."/>
            <person name="Anjard C."/>
            <person name="Hemphill L."/>
            <person name="Bason N."/>
            <person name="Farbrother P."/>
            <person name="Desany B."/>
            <person name="Just E."/>
            <person name="Morio T."/>
            <person name="Rost R."/>
            <person name="Churcher C.M."/>
            <person name="Cooper J."/>
            <person name="Haydock S."/>
            <person name="van Driessche N."/>
            <person name="Cronin A."/>
            <person name="Goodhead I."/>
            <person name="Muzny D.M."/>
            <person name="Mourier T."/>
            <person name="Pain A."/>
            <person name="Lu M."/>
            <person name="Harper D."/>
            <person name="Lindsay R."/>
            <person name="Hauser H."/>
            <person name="James K.D."/>
            <person name="Quiles M."/>
            <person name="Madan Babu M."/>
            <person name="Saito T."/>
            <person name="Buchrieser C."/>
            <person name="Wardroper A."/>
            <person name="Felder M."/>
            <person name="Thangavelu M."/>
            <person name="Johnson D."/>
            <person name="Knights A."/>
            <person name="Loulseged H."/>
            <person name="Mungall K.L."/>
            <person name="Oliver K."/>
            <person name="Price C."/>
            <person name="Quail M.A."/>
            <person name="Urushihara H."/>
            <person name="Hernandez J."/>
            <person name="Rabbinowitsch E."/>
            <person name="Steffen D."/>
            <person name="Sanders M."/>
            <person name="Ma J."/>
            <person name="Kohara Y."/>
            <person name="Sharp S."/>
            <person name="Simmonds M.N."/>
            <person name="Spiegler S."/>
            <person name="Tivey A."/>
            <person name="Sugano S."/>
            <person name="White B."/>
            <person name="Walker D."/>
            <person name="Woodward J.R."/>
            <person name="Winckler T."/>
            <person name="Tanaka Y."/>
            <person name="Shaulsky G."/>
            <person name="Schleicher M."/>
            <person name="Weinstock G.M."/>
            <person name="Rosenthal A."/>
            <person name="Cox E.C."/>
            <person name="Chisholm R.L."/>
            <person name="Gibbs R.A."/>
            <person name="Loomis W.F."/>
            <person name="Platzer M."/>
            <person name="Kay R.R."/>
            <person name="Williams J.G."/>
            <person name="Dear P.H."/>
            <person name="Noegel A.A."/>
            <person name="Barrell B.G."/>
            <person name="Kuspa A."/>
        </authorList>
    </citation>
    <scope>NUCLEOTIDE SEQUENCE [LARGE SCALE GENOMIC DNA]</scope>
    <source>
        <strain>AX4</strain>
    </source>
</reference>